<name>MINE_CLOPS</name>
<dbReference type="EMBL" id="CP000312">
    <property type="protein sequence ID" value="ABG86880.1"/>
    <property type="molecule type" value="Genomic_DNA"/>
</dbReference>
<dbReference type="RefSeq" id="WP_011592943.1">
    <property type="nucleotide sequence ID" value="NC_008262.1"/>
</dbReference>
<dbReference type="KEGG" id="cpr:CPR_2104"/>
<dbReference type="Proteomes" id="UP000001824">
    <property type="component" value="Chromosome"/>
</dbReference>
<dbReference type="GO" id="GO:0051301">
    <property type="term" value="P:cell division"/>
    <property type="evidence" value="ECO:0007669"/>
    <property type="project" value="UniProtKB-KW"/>
</dbReference>
<dbReference type="GO" id="GO:0032955">
    <property type="term" value="P:regulation of division septum assembly"/>
    <property type="evidence" value="ECO:0007669"/>
    <property type="project" value="InterPro"/>
</dbReference>
<dbReference type="Gene3D" id="3.30.1070.10">
    <property type="entry name" value="Cell division topological specificity factor MinE"/>
    <property type="match status" value="1"/>
</dbReference>
<dbReference type="HAMAP" id="MF_00262">
    <property type="entry name" value="MinE"/>
    <property type="match status" value="1"/>
</dbReference>
<dbReference type="InterPro" id="IPR005527">
    <property type="entry name" value="MinE"/>
</dbReference>
<dbReference type="InterPro" id="IPR036707">
    <property type="entry name" value="MinE_sf"/>
</dbReference>
<dbReference type="NCBIfam" id="TIGR01215">
    <property type="entry name" value="minE"/>
    <property type="match status" value="1"/>
</dbReference>
<dbReference type="Pfam" id="PF03776">
    <property type="entry name" value="MinE"/>
    <property type="match status" value="1"/>
</dbReference>
<dbReference type="SUPFAM" id="SSF55229">
    <property type="entry name" value="Cell division protein MinE topological specificity domain"/>
    <property type="match status" value="1"/>
</dbReference>
<keyword id="KW-0131">Cell cycle</keyword>
<keyword id="KW-0132">Cell division</keyword>
<proteinExistence type="inferred from homology"/>
<gene>
    <name evidence="1" type="primary">minE</name>
    <name type="ordered locus">CPR_2104</name>
</gene>
<reference key="1">
    <citation type="journal article" date="2006" name="Genome Res.">
        <title>Skewed genomic variability in strains of the toxigenic bacterial pathogen, Clostridium perfringens.</title>
        <authorList>
            <person name="Myers G.S.A."/>
            <person name="Rasko D.A."/>
            <person name="Cheung J.K."/>
            <person name="Ravel J."/>
            <person name="Seshadri R."/>
            <person name="DeBoy R.T."/>
            <person name="Ren Q."/>
            <person name="Varga J."/>
            <person name="Awad M.M."/>
            <person name="Brinkac L.M."/>
            <person name="Daugherty S.C."/>
            <person name="Haft D.H."/>
            <person name="Dodson R.J."/>
            <person name="Madupu R."/>
            <person name="Nelson W.C."/>
            <person name="Rosovitz M.J."/>
            <person name="Sullivan S.A."/>
            <person name="Khouri H."/>
            <person name="Dimitrov G.I."/>
            <person name="Watkins K.L."/>
            <person name="Mulligan S."/>
            <person name="Benton J."/>
            <person name="Radune D."/>
            <person name="Fisher D.J."/>
            <person name="Atkins H.S."/>
            <person name="Hiscox T."/>
            <person name="Jost B.H."/>
            <person name="Billington S.J."/>
            <person name="Songer J.G."/>
            <person name="McClane B.A."/>
            <person name="Titball R.W."/>
            <person name="Rood J.I."/>
            <person name="Melville S.B."/>
            <person name="Paulsen I.T."/>
        </authorList>
    </citation>
    <scope>NUCLEOTIDE SEQUENCE [LARGE SCALE GENOMIC DNA]</scope>
    <source>
        <strain>SM101 / Type A</strain>
    </source>
</reference>
<comment type="function">
    <text evidence="1">Prevents the cell division inhibition by proteins MinC and MinD at internal division sites while permitting inhibition at polar sites. This ensures cell division at the proper site by restricting the formation of a division septum at the midpoint of the long axis of the cell.</text>
</comment>
<comment type="similarity">
    <text evidence="1">Belongs to the MinE family.</text>
</comment>
<feature type="chain" id="PRO_0000298103" description="Cell division topological specificity factor">
    <location>
        <begin position="1"/>
        <end position="90"/>
    </location>
</feature>
<protein>
    <recommendedName>
        <fullName evidence="1">Cell division topological specificity factor</fullName>
    </recommendedName>
</protein>
<evidence type="ECO:0000255" key="1">
    <source>
        <dbReference type="HAMAP-Rule" id="MF_00262"/>
    </source>
</evidence>
<sequence>MSFLNVFSSRPTPKQVAKDRLKVILIHDRGELSDEVLDKIRLEILDVLSKYVEIENEDVDITVTKSNAIEGESPSLVANIPIKNIKGKAR</sequence>
<accession>Q0SR44</accession>
<organism>
    <name type="scientific">Clostridium perfringens (strain SM101 / Type A)</name>
    <dbReference type="NCBI Taxonomy" id="289380"/>
    <lineage>
        <taxon>Bacteria</taxon>
        <taxon>Bacillati</taxon>
        <taxon>Bacillota</taxon>
        <taxon>Clostridia</taxon>
        <taxon>Eubacteriales</taxon>
        <taxon>Clostridiaceae</taxon>
        <taxon>Clostridium</taxon>
    </lineage>
</organism>